<protein>
    <recommendedName>
        <fullName evidence="1">1-deoxy-D-xylulose-5-phosphate synthase</fullName>
        <ecNumber evidence="1">2.2.1.7</ecNumber>
    </recommendedName>
    <alternativeName>
        <fullName evidence="1">1-deoxyxylulose-5-phosphate synthase</fullName>
        <shortName evidence="1">DXP synthase</shortName>
        <shortName evidence="1">DXPS</shortName>
    </alternativeName>
</protein>
<dbReference type="EC" id="2.2.1.7" evidence="1"/>
<dbReference type="EMBL" id="AE016958">
    <property type="protein sequence ID" value="AAS05120.1"/>
    <property type="molecule type" value="Genomic_DNA"/>
</dbReference>
<dbReference type="RefSeq" id="WP_010949732.1">
    <property type="nucleotide sequence ID" value="NZ_CP106873.1"/>
</dbReference>
<dbReference type="SMR" id="Q73W57"/>
<dbReference type="STRING" id="262316.MAP_2803c"/>
<dbReference type="KEGG" id="mpa:MAP_2803c"/>
<dbReference type="PATRIC" id="fig|262316.17.peg.2969"/>
<dbReference type="eggNOG" id="COG1154">
    <property type="taxonomic scope" value="Bacteria"/>
</dbReference>
<dbReference type="HOGENOM" id="CLU_009227_1_4_11"/>
<dbReference type="UniPathway" id="UPA00064">
    <property type="reaction ID" value="UER00091"/>
</dbReference>
<dbReference type="Proteomes" id="UP000000580">
    <property type="component" value="Chromosome"/>
</dbReference>
<dbReference type="GO" id="GO:0005829">
    <property type="term" value="C:cytosol"/>
    <property type="evidence" value="ECO:0007669"/>
    <property type="project" value="TreeGrafter"/>
</dbReference>
<dbReference type="GO" id="GO:0008661">
    <property type="term" value="F:1-deoxy-D-xylulose-5-phosphate synthase activity"/>
    <property type="evidence" value="ECO:0007669"/>
    <property type="project" value="UniProtKB-UniRule"/>
</dbReference>
<dbReference type="GO" id="GO:0000287">
    <property type="term" value="F:magnesium ion binding"/>
    <property type="evidence" value="ECO:0007669"/>
    <property type="project" value="UniProtKB-UniRule"/>
</dbReference>
<dbReference type="GO" id="GO:0030976">
    <property type="term" value="F:thiamine pyrophosphate binding"/>
    <property type="evidence" value="ECO:0007669"/>
    <property type="project" value="UniProtKB-UniRule"/>
</dbReference>
<dbReference type="GO" id="GO:0052865">
    <property type="term" value="P:1-deoxy-D-xylulose 5-phosphate biosynthetic process"/>
    <property type="evidence" value="ECO:0007669"/>
    <property type="project" value="UniProtKB-UniPathway"/>
</dbReference>
<dbReference type="GO" id="GO:0019288">
    <property type="term" value="P:isopentenyl diphosphate biosynthetic process, methylerythritol 4-phosphate pathway"/>
    <property type="evidence" value="ECO:0007669"/>
    <property type="project" value="TreeGrafter"/>
</dbReference>
<dbReference type="GO" id="GO:0016114">
    <property type="term" value="P:terpenoid biosynthetic process"/>
    <property type="evidence" value="ECO:0007669"/>
    <property type="project" value="UniProtKB-UniRule"/>
</dbReference>
<dbReference type="GO" id="GO:0009228">
    <property type="term" value="P:thiamine biosynthetic process"/>
    <property type="evidence" value="ECO:0007669"/>
    <property type="project" value="UniProtKB-UniRule"/>
</dbReference>
<dbReference type="CDD" id="cd02007">
    <property type="entry name" value="TPP_DXS"/>
    <property type="match status" value="1"/>
</dbReference>
<dbReference type="CDD" id="cd07033">
    <property type="entry name" value="TPP_PYR_DXS_TK_like"/>
    <property type="match status" value="1"/>
</dbReference>
<dbReference type="FunFam" id="3.40.50.920:FF:000002">
    <property type="entry name" value="1-deoxy-D-xylulose-5-phosphate synthase"/>
    <property type="match status" value="1"/>
</dbReference>
<dbReference type="FunFam" id="3.40.50.970:FF:000005">
    <property type="entry name" value="1-deoxy-D-xylulose-5-phosphate synthase"/>
    <property type="match status" value="1"/>
</dbReference>
<dbReference type="Gene3D" id="3.40.50.920">
    <property type="match status" value="1"/>
</dbReference>
<dbReference type="Gene3D" id="3.40.50.970">
    <property type="match status" value="2"/>
</dbReference>
<dbReference type="HAMAP" id="MF_00315">
    <property type="entry name" value="DXP_synth"/>
    <property type="match status" value="1"/>
</dbReference>
<dbReference type="InterPro" id="IPR005477">
    <property type="entry name" value="Dxylulose-5-P_synthase"/>
</dbReference>
<dbReference type="InterPro" id="IPR029061">
    <property type="entry name" value="THDP-binding"/>
</dbReference>
<dbReference type="InterPro" id="IPR009014">
    <property type="entry name" value="Transketo_C/PFOR_II"/>
</dbReference>
<dbReference type="InterPro" id="IPR005475">
    <property type="entry name" value="Transketolase-like_Pyr-bd"/>
</dbReference>
<dbReference type="InterPro" id="IPR020826">
    <property type="entry name" value="Transketolase_BS"/>
</dbReference>
<dbReference type="InterPro" id="IPR033248">
    <property type="entry name" value="Transketolase_C"/>
</dbReference>
<dbReference type="InterPro" id="IPR049557">
    <property type="entry name" value="Transketolase_CS"/>
</dbReference>
<dbReference type="NCBIfam" id="TIGR00204">
    <property type="entry name" value="dxs"/>
    <property type="match status" value="1"/>
</dbReference>
<dbReference type="NCBIfam" id="NF003933">
    <property type="entry name" value="PRK05444.2-2"/>
    <property type="match status" value="1"/>
</dbReference>
<dbReference type="PANTHER" id="PTHR43322">
    <property type="entry name" value="1-D-DEOXYXYLULOSE 5-PHOSPHATE SYNTHASE-RELATED"/>
    <property type="match status" value="1"/>
</dbReference>
<dbReference type="PANTHER" id="PTHR43322:SF5">
    <property type="entry name" value="1-DEOXY-D-XYLULOSE-5-PHOSPHATE SYNTHASE, CHLOROPLASTIC"/>
    <property type="match status" value="1"/>
</dbReference>
<dbReference type="Pfam" id="PF13292">
    <property type="entry name" value="DXP_synthase_N"/>
    <property type="match status" value="1"/>
</dbReference>
<dbReference type="Pfam" id="PF02779">
    <property type="entry name" value="Transket_pyr"/>
    <property type="match status" value="1"/>
</dbReference>
<dbReference type="Pfam" id="PF02780">
    <property type="entry name" value="Transketolase_C"/>
    <property type="match status" value="1"/>
</dbReference>
<dbReference type="SMART" id="SM00861">
    <property type="entry name" value="Transket_pyr"/>
    <property type="match status" value="1"/>
</dbReference>
<dbReference type="SUPFAM" id="SSF52518">
    <property type="entry name" value="Thiamin diphosphate-binding fold (THDP-binding)"/>
    <property type="match status" value="1"/>
</dbReference>
<dbReference type="SUPFAM" id="SSF52922">
    <property type="entry name" value="TK C-terminal domain-like"/>
    <property type="match status" value="1"/>
</dbReference>
<dbReference type="PROSITE" id="PS00801">
    <property type="entry name" value="TRANSKETOLASE_1"/>
    <property type="match status" value="1"/>
</dbReference>
<dbReference type="PROSITE" id="PS00802">
    <property type="entry name" value="TRANSKETOLASE_2"/>
    <property type="match status" value="1"/>
</dbReference>
<sequence length="641" mass="68262">MLEQIRGPADLQHLSTHQLRELAAEIREFLIHKVAATGGHLGPNLGVVELTLALHRVFDSPHDPIIFDTGHQAYVHKMLTGRAHEFESLRKKGGLSGYPSRSESEHDWVESSHASAALSYADGLAKAFELSGHRNRHVVAVVGDGALTGGMCWEALNNIAASGRPVIIVVNDNGRSYAPTIGGVADHLATLRLQPAYEQALQRGRDALRALPLVGKFAYRVMHSVKAGIKDSLSPQLLFTDLGLKYVGPVDGHDERAVEAALRHARGFGRPVIVHVVTRKGMGYAPAEDDEADQMHSCGVIDPVTGQATKVAGPGWTATFSDALIGYARKRRDIVAITAAMPGPTGLTPFGQQFPDRLFDVGIAEQHAMTSAAGLAMGGMHPVVAIYSTFLNRAFDQIMMDVALHRLPVTMVLDRAGITGSDGASHNGMWDLSILGVVPGMRVAAPRDAARLREELGEALDVDDGPTALRFPKGDVGEDIPAIERRGSGLSGVDVLALPASGCNHDVLLIGVGAFAPMALAVARRLADQGIGVTVVDPRWVLPVSDSILELAARHKLVVTCEDNGVNGGVGSAVSAALRRAELDVPCRDVGLPQRFYEHASRGELLADLALTDQDIARRITGWVAALGSGVAEAEIREHLD</sequence>
<comment type="function">
    <text evidence="1">Catalyzes the acyloin condensation reaction between C atoms 2 and 3 of pyruvate and glyceraldehyde 3-phosphate to yield 1-deoxy-D-xylulose-5-phosphate (DXP).</text>
</comment>
<comment type="catalytic activity">
    <reaction evidence="1">
        <text>D-glyceraldehyde 3-phosphate + pyruvate + H(+) = 1-deoxy-D-xylulose 5-phosphate + CO2</text>
        <dbReference type="Rhea" id="RHEA:12605"/>
        <dbReference type="ChEBI" id="CHEBI:15361"/>
        <dbReference type="ChEBI" id="CHEBI:15378"/>
        <dbReference type="ChEBI" id="CHEBI:16526"/>
        <dbReference type="ChEBI" id="CHEBI:57792"/>
        <dbReference type="ChEBI" id="CHEBI:59776"/>
        <dbReference type="EC" id="2.2.1.7"/>
    </reaction>
</comment>
<comment type="cofactor">
    <cofactor evidence="1">
        <name>Mg(2+)</name>
        <dbReference type="ChEBI" id="CHEBI:18420"/>
    </cofactor>
    <text evidence="1">Binds 1 Mg(2+) ion per subunit.</text>
</comment>
<comment type="cofactor">
    <cofactor evidence="1">
        <name>thiamine diphosphate</name>
        <dbReference type="ChEBI" id="CHEBI:58937"/>
    </cofactor>
    <text evidence="1">Binds 1 thiamine pyrophosphate per subunit.</text>
</comment>
<comment type="pathway">
    <text evidence="1">Metabolic intermediate biosynthesis; 1-deoxy-D-xylulose 5-phosphate biosynthesis; 1-deoxy-D-xylulose 5-phosphate from D-glyceraldehyde 3-phosphate and pyruvate: step 1/1.</text>
</comment>
<comment type="subunit">
    <text evidence="1">Homodimer.</text>
</comment>
<comment type="similarity">
    <text evidence="1">Belongs to the transketolase family. DXPS subfamily.</text>
</comment>
<accession>Q73W57</accession>
<feature type="chain" id="PRO_0000256440" description="1-deoxy-D-xylulose-5-phosphate synthase">
    <location>
        <begin position="1"/>
        <end position="641"/>
    </location>
</feature>
<feature type="binding site" evidence="1">
    <location>
        <position position="71"/>
    </location>
    <ligand>
        <name>thiamine diphosphate</name>
        <dbReference type="ChEBI" id="CHEBI:58937"/>
    </ligand>
</feature>
<feature type="binding site" evidence="1">
    <location>
        <begin position="112"/>
        <end position="114"/>
    </location>
    <ligand>
        <name>thiamine diphosphate</name>
        <dbReference type="ChEBI" id="CHEBI:58937"/>
    </ligand>
</feature>
<feature type="binding site" evidence="1">
    <location>
        <position position="144"/>
    </location>
    <ligand>
        <name>Mg(2+)</name>
        <dbReference type="ChEBI" id="CHEBI:18420"/>
    </ligand>
</feature>
<feature type="binding site" evidence="1">
    <location>
        <begin position="145"/>
        <end position="146"/>
    </location>
    <ligand>
        <name>thiamine diphosphate</name>
        <dbReference type="ChEBI" id="CHEBI:58937"/>
    </ligand>
</feature>
<feature type="binding site" evidence="1">
    <location>
        <position position="173"/>
    </location>
    <ligand>
        <name>Mg(2+)</name>
        <dbReference type="ChEBI" id="CHEBI:18420"/>
    </ligand>
</feature>
<feature type="binding site" evidence="1">
    <location>
        <position position="173"/>
    </location>
    <ligand>
        <name>thiamine diphosphate</name>
        <dbReference type="ChEBI" id="CHEBI:58937"/>
    </ligand>
</feature>
<feature type="binding site" evidence="1">
    <location>
        <position position="284"/>
    </location>
    <ligand>
        <name>thiamine diphosphate</name>
        <dbReference type="ChEBI" id="CHEBI:58937"/>
    </ligand>
</feature>
<feature type="binding site" evidence="1">
    <location>
        <position position="365"/>
    </location>
    <ligand>
        <name>thiamine diphosphate</name>
        <dbReference type="ChEBI" id="CHEBI:58937"/>
    </ligand>
</feature>
<gene>
    <name evidence="1" type="primary">dxs</name>
    <name type="ordered locus">MAP_2803c</name>
</gene>
<name>DXS_MYCPA</name>
<organism>
    <name type="scientific">Mycolicibacterium paratuberculosis (strain ATCC BAA-968 / K-10)</name>
    <name type="common">Mycobacterium paratuberculosis</name>
    <dbReference type="NCBI Taxonomy" id="262316"/>
    <lineage>
        <taxon>Bacteria</taxon>
        <taxon>Bacillati</taxon>
        <taxon>Actinomycetota</taxon>
        <taxon>Actinomycetes</taxon>
        <taxon>Mycobacteriales</taxon>
        <taxon>Mycobacteriaceae</taxon>
        <taxon>Mycobacterium</taxon>
        <taxon>Mycobacterium avium complex (MAC)</taxon>
    </lineage>
</organism>
<reference key="1">
    <citation type="journal article" date="2005" name="Proc. Natl. Acad. Sci. U.S.A.">
        <title>The complete genome sequence of Mycobacterium avium subspecies paratuberculosis.</title>
        <authorList>
            <person name="Li L."/>
            <person name="Bannantine J.P."/>
            <person name="Zhang Q."/>
            <person name="Amonsin A."/>
            <person name="May B.J."/>
            <person name="Alt D."/>
            <person name="Banerji N."/>
            <person name="Kanjilal S."/>
            <person name="Kapur V."/>
        </authorList>
    </citation>
    <scope>NUCLEOTIDE SEQUENCE [LARGE SCALE GENOMIC DNA]</scope>
    <source>
        <strain>ATCC BAA-968 / K-10</strain>
    </source>
</reference>
<keyword id="KW-0414">Isoprene biosynthesis</keyword>
<keyword id="KW-0460">Magnesium</keyword>
<keyword id="KW-0479">Metal-binding</keyword>
<keyword id="KW-1185">Reference proteome</keyword>
<keyword id="KW-0784">Thiamine biosynthesis</keyword>
<keyword id="KW-0786">Thiamine pyrophosphate</keyword>
<keyword id="KW-0808">Transferase</keyword>
<proteinExistence type="inferred from homology"/>
<evidence type="ECO:0000255" key="1">
    <source>
        <dbReference type="HAMAP-Rule" id="MF_00315"/>
    </source>
</evidence>